<gene>
    <name evidence="1" type="primary">pyrG</name>
    <name type="ordered locus">Aave_1327</name>
</gene>
<dbReference type="EC" id="6.3.4.2" evidence="1"/>
<dbReference type="EMBL" id="CP000512">
    <property type="protein sequence ID" value="ABM31918.1"/>
    <property type="molecule type" value="Genomic_DNA"/>
</dbReference>
<dbReference type="RefSeq" id="WP_011794470.1">
    <property type="nucleotide sequence ID" value="NC_008752.1"/>
</dbReference>
<dbReference type="SMR" id="A1TLT0"/>
<dbReference type="STRING" id="397945.Aave_1327"/>
<dbReference type="GeneID" id="79790990"/>
<dbReference type="KEGG" id="aav:Aave_1327"/>
<dbReference type="eggNOG" id="COG0504">
    <property type="taxonomic scope" value="Bacteria"/>
</dbReference>
<dbReference type="HOGENOM" id="CLU_011675_5_0_4"/>
<dbReference type="OrthoDB" id="9801107at2"/>
<dbReference type="UniPathway" id="UPA00159">
    <property type="reaction ID" value="UER00277"/>
</dbReference>
<dbReference type="Proteomes" id="UP000002596">
    <property type="component" value="Chromosome"/>
</dbReference>
<dbReference type="GO" id="GO:0005829">
    <property type="term" value="C:cytosol"/>
    <property type="evidence" value="ECO:0007669"/>
    <property type="project" value="TreeGrafter"/>
</dbReference>
<dbReference type="GO" id="GO:0005524">
    <property type="term" value="F:ATP binding"/>
    <property type="evidence" value="ECO:0007669"/>
    <property type="project" value="UniProtKB-KW"/>
</dbReference>
<dbReference type="GO" id="GO:0003883">
    <property type="term" value="F:CTP synthase activity"/>
    <property type="evidence" value="ECO:0007669"/>
    <property type="project" value="UniProtKB-UniRule"/>
</dbReference>
<dbReference type="GO" id="GO:0004359">
    <property type="term" value="F:glutaminase activity"/>
    <property type="evidence" value="ECO:0007669"/>
    <property type="project" value="RHEA"/>
</dbReference>
<dbReference type="GO" id="GO:0042802">
    <property type="term" value="F:identical protein binding"/>
    <property type="evidence" value="ECO:0007669"/>
    <property type="project" value="TreeGrafter"/>
</dbReference>
<dbReference type="GO" id="GO:0046872">
    <property type="term" value="F:metal ion binding"/>
    <property type="evidence" value="ECO:0007669"/>
    <property type="project" value="UniProtKB-KW"/>
</dbReference>
<dbReference type="GO" id="GO:0044210">
    <property type="term" value="P:'de novo' CTP biosynthetic process"/>
    <property type="evidence" value="ECO:0007669"/>
    <property type="project" value="UniProtKB-UniRule"/>
</dbReference>
<dbReference type="GO" id="GO:0019856">
    <property type="term" value="P:pyrimidine nucleobase biosynthetic process"/>
    <property type="evidence" value="ECO:0007669"/>
    <property type="project" value="TreeGrafter"/>
</dbReference>
<dbReference type="CDD" id="cd03113">
    <property type="entry name" value="CTPS_N"/>
    <property type="match status" value="1"/>
</dbReference>
<dbReference type="CDD" id="cd01746">
    <property type="entry name" value="GATase1_CTP_Synthase"/>
    <property type="match status" value="1"/>
</dbReference>
<dbReference type="FunFam" id="3.40.50.300:FF:000009">
    <property type="entry name" value="CTP synthase"/>
    <property type="match status" value="1"/>
</dbReference>
<dbReference type="FunFam" id="3.40.50.880:FF:000002">
    <property type="entry name" value="CTP synthase"/>
    <property type="match status" value="1"/>
</dbReference>
<dbReference type="Gene3D" id="3.40.50.880">
    <property type="match status" value="1"/>
</dbReference>
<dbReference type="Gene3D" id="3.40.50.300">
    <property type="entry name" value="P-loop containing nucleotide triphosphate hydrolases"/>
    <property type="match status" value="1"/>
</dbReference>
<dbReference type="HAMAP" id="MF_01227">
    <property type="entry name" value="PyrG"/>
    <property type="match status" value="1"/>
</dbReference>
<dbReference type="InterPro" id="IPR029062">
    <property type="entry name" value="Class_I_gatase-like"/>
</dbReference>
<dbReference type="InterPro" id="IPR004468">
    <property type="entry name" value="CTP_synthase"/>
</dbReference>
<dbReference type="InterPro" id="IPR017456">
    <property type="entry name" value="CTP_synthase_N"/>
</dbReference>
<dbReference type="InterPro" id="IPR017926">
    <property type="entry name" value="GATASE"/>
</dbReference>
<dbReference type="InterPro" id="IPR033828">
    <property type="entry name" value="GATase1_CTP_Synthase"/>
</dbReference>
<dbReference type="InterPro" id="IPR027417">
    <property type="entry name" value="P-loop_NTPase"/>
</dbReference>
<dbReference type="NCBIfam" id="NF003792">
    <property type="entry name" value="PRK05380.1"/>
    <property type="match status" value="1"/>
</dbReference>
<dbReference type="NCBIfam" id="TIGR00337">
    <property type="entry name" value="PyrG"/>
    <property type="match status" value="1"/>
</dbReference>
<dbReference type="PANTHER" id="PTHR11550">
    <property type="entry name" value="CTP SYNTHASE"/>
    <property type="match status" value="1"/>
</dbReference>
<dbReference type="PANTHER" id="PTHR11550:SF0">
    <property type="entry name" value="CTP SYNTHASE-RELATED"/>
    <property type="match status" value="1"/>
</dbReference>
<dbReference type="Pfam" id="PF06418">
    <property type="entry name" value="CTP_synth_N"/>
    <property type="match status" value="1"/>
</dbReference>
<dbReference type="Pfam" id="PF00117">
    <property type="entry name" value="GATase"/>
    <property type="match status" value="1"/>
</dbReference>
<dbReference type="SUPFAM" id="SSF52317">
    <property type="entry name" value="Class I glutamine amidotransferase-like"/>
    <property type="match status" value="1"/>
</dbReference>
<dbReference type="SUPFAM" id="SSF52540">
    <property type="entry name" value="P-loop containing nucleoside triphosphate hydrolases"/>
    <property type="match status" value="1"/>
</dbReference>
<dbReference type="PROSITE" id="PS51273">
    <property type="entry name" value="GATASE_TYPE_1"/>
    <property type="match status" value="1"/>
</dbReference>
<evidence type="ECO:0000255" key="1">
    <source>
        <dbReference type="HAMAP-Rule" id="MF_01227"/>
    </source>
</evidence>
<organism>
    <name type="scientific">Paracidovorax citrulli (strain AAC00-1)</name>
    <name type="common">Acidovorax citrulli</name>
    <dbReference type="NCBI Taxonomy" id="397945"/>
    <lineage>
        <taxon>Bacteria</taxon>
        <taxon>Pseudomonadati</taxon>
        <taxon>Pseudomonadota</taxon>
        <taxon>Betaproteobacteria</taxon>
        <taxon>Burkholderiales</taxon>
        <taxon>Comamonadaceae</taxon>
        <taxon>Paracidovorax</taxon>
    </lineage>
</organism>
<sequence>MTKFVFVTGGVVSSLGKGIASASLAAILESRGLKVTLIKLDPYINVDPGTMSPFQHGEVFVTDDGAETDLDLGHYERFIETRMKKTNNFTTGRIYQSVLEKERRGDYLGKTVQVIPHVTNEIQEYVKRGAGIGTGDAVDVAIVEIGGTVGDIESLPFLEAVRQMSLRMGPNNSAFVHLTYLPYIAAAGELKTKPTQHTVQKLREIGIQPDALLCRADRRIPDEERGKISLFTNVAEWGVISMWDVDTIYKVPRMLHEQGLDGLICDKLRLNTPPTSLKRWDQLVYETEHPQGEVTIAMVGKYVDLSDSYKSVNEALRHAGMKNHVRVKIEHVDSETIAPGDAAEKLAKYDAILVPGGFGARGVEGKICTARYAREQRVPYLGICLGMQVATIEYARHVAGLANANSTEFDAATPHPVIALITEWKDADGTIQTRSETSDLGGTMRLGAQSSDVASGTLAHEIYGNIVTERHRHRYEANVNYLDRLRKAGLVISALTQREQLTEIVELPREVHPWFIGVQFHPEFKSTPWDGHPLFNAFIKAAIDHQKSRQPTLPAAAAS</sequence>
<name>PYRG_PARC0</name>
<keyword id="KW-0067">ATP-binding</keyword>
<keyword id="KW-0315">Glutamine amidotransferase</keyword>
<keyword id="KW-0436">Ligase</keyword>
<keyword id="KW-0460">Magnesium</keyword>
<keyword id="KW-0479">Metal-binding</keyword>
<keyword id="KW-0547">Nucleotide-binding</keyword>
<keyword id="KW-0665">Pyrimidine biosynthesis</keyword>
<reference key="1">
    <citation type="submission" date="2006-12" db="EMBL/GenBank/DDBJ databases">
        <title>Complete sequence of Acidovorax avenae subsp. citrulli AAC00-1.</title>
        <authorList>
            <person name="Copeland A."/>
            <person name="Lucas S."/>
            <person name="Lapidus A."/>
            <person name="Barry K."/>
            <person name="Detter J.C."/>
            <person name="Glavina del Rio T."/>
            <person name="Dalin E."/>
            <person name="Tice H."/>
            <person name="Pitluck S."/>
            <person name="Kiss H."/>
            <person name="Brettin T."/>
            <person name="Bruce D."/>
            <person name="Han C."/>
            <person name="Tapia R."/>
            <person name="Gilna P."/>
            <person name="Schmutz J."/>
            <person name="Larimer F."/>
            <person name="Land M."/>
            <person name="Hauser L."/>
            <person name="Kyrpides N."/>
            <person name="Kim E."/>
            <person name="Stahl D."/>
            <person name="Richardson P."/>
        </authorList>
    </citation>
    <scope>NUCLEOTIDE SEQUENCE [LARGE SCALE GENOMIC DNA]</scope>
    <source>
        <strain>AAC00-1</strain>
    </source>
</reference>
<comment type="function">
    <text evidence="1">Catalyzes the ATP-dependent amination of UTP to CTP with either L-glutamine or ammonia as the source of nitrogen. Regulates intracellular CTP levels through interactions with the four ribonucleotide triphosphates.</text>
</comment>
<comment type="catalytic activity">
    <reaction evidence="1">
        <text>UTP + L-glutamine + ATP + H2O = CTP + L-glutamate + ADP + phosphate + 2 H(+)</text>
        <dbReference type="Rhea" id="RHEA:26426"/>
        <dbReference type="ChEBI" id="CHEBI:15377"/>
        <dbReference type="ChEBI" id="CHEBI:15378"/>
        <dbReference type="ChEBI" id="CHEBI:29985"/>
        <dbReference type="ChEBI" id="CHEBI:30616"/>
        <dbReference type="ChEBI" id="CHEBI:37563"/>
        <dbReference type="ChEBI" id="CHEBI:43474"/>
        <dbReference type="ChEBI" id="CHEBI:46398"/>
        <dbReference type="ChEBI" id="CHEBI:58359"/>
        <dbReference type="ChEBI" id="CHEBI:456216"/>
        <dbReference type="EC" id="6.3.4.2"/>
    </reaction>
</comment>
<comment type="catalytic activity">
    <reaction evidence="1">
        <text>L-glutamine + H2O = L-glutamate + NH4(+)</text>
        <dbReference type="Rhea" id="RHEA:15889"/>
        <dbReference type="ChEBI" id="CHEBI:15377"/>
        <dbReference type="ChEBI" id="CHEBI:28938"/>
        <dbReference type="ChEBI" id="CHEBI:29985"/>
        <dbReference type="ChEBI" id="CHEBI:58359"/>
    </reaction>
</comment>
<comment type="catalytic activity">
    <reaction evidence="1">
        <text>UTP + NH4(+) + ATP = CTP + ADP + phosphate + 2 H(+)</text>
        <dbReference type="Rhea" id="RHEA:16597"/>
        <dbReference type="ChEBI" id="CHEBI:15378"/>
        <dbReference type="ChEBI" id="CHEBI:28938"/>
        <dbReference type="ChEBI" id="CHEBI:30616"/>
        <dbReference type="ChEBI" id="CHEBI:37563"/>
        <dbReference type="ChEBI" id="CHEBI:43474"/>
        <dbReference type="ChEBI" id="CHEBI:46398"/>
        <dbReference type="ChEBI" id="CHEBI:456216"/>
    </reaction>
</comment>
<comment type="activity regulation">
    <text evidence="1">Allosterically activated by GTP, when glutamine is the substrate; GTP has no effect on the reaction when ammonia is the substrate. The allosteric effector GTP functions by stabilizing the protein conformation that binds the tetrahedral intermediate(s) formed during glutamine hydrolysis. Inhibited by the product CTP, via allosteric rather than competitive inhibition.</text>
</comment>
<comment type="pathway">
    <text evidence="1">Pyrimidine metabolism; CTP biosynthesis via de novo pathway; CTP from UDP: step 2/2.</text>
</comment>
<comment type="subunit">
    <text evidence="1">Homotetramer.</text>
</comment>
<comment type="miscellaneous">
    <text evidence="1">CTPSs have evolved a hybrid strategy for distinguishing between UTP and CTP. The overlapping regions of the product feedback inhibitory and substrate sites recognize a common feature in both compounds, the triphosphate moiety. To differentiate isosteric substrate and product pyrimidine rings, an additional pocket far from the expected kinase/ligase catalytic site, specifically recognizes the cytosine and ribose portions of the product inhibitor.</text>
</comment>
<comment type="similarity">
    <text evidence="1">Belongs to the CTP synthase family.</text>
</comment>
<feature type="chain" id="PRO_1000139354" description="CTP synthase">
    <location>
        <begin position="1"/>
        <end position="559"/>
    </location>
</feature>
<feature type="domain" description="Glutamine amidotransferase type-1" evidence="1">
    <location>
        <begin position="295"/>
        <end position="548"/>
    </location>
</feature>
<feature type="region of interest" description="Amidoligase domain" evidence="1">
    <location>
        <begin position="1"/>
        <end position="270"/>
    </location>
</feature>
<feature type="active site" description="Nucleophile; for glutamine hydrolysis" evidence="1">
    <location>
        <position position="384"/>
    </location>
</feature>
<feature type="active site" evidence="1">
    <location>
        <position position="521"/>
    </location>
</feature>
<feature type="active site" evidence="1">
    <location>
        <position position="523"/>
    </location>
</feature>
<feature type="binding site" evidence="1">
    <location>
        <position position="13"/>
    </location>
    <ligand>
        <name>CTP</name>
        <dbReference type="ChEBI" id="CHEBI:37563"/>
        <note>allosteric inhibitor</note>
    </ligand>
</feature>
<feature type="binding site" evidence="1">
    <location>
        <position position="13"/>
    </location>
    <ligand>
        <name>UTP</name>
        <dbReference type="ChEBI" id="CHEBI:46398"/>
    </ligand>
</feature>
<feature type="binding site" evidence="1">
    <location>
        <begin position="14"/>
        <end position="19"/>
    </location>
    <ligand>
        <name>ATP</name>
        <dbReference type="ChEBI" id="CHEBI:30616"/>
    </ligand>
</feature>
<feature type="binding site" evidence="1">
    <location>
        <position position="71"/>
    </location>
    <ligand>
        <name>ATP</name>
        <dbReference type="ChEBI" id="CHEBI:30616"/>
    </ligand>
</feature>
<feature type="binding site" evidence="1">
    <location>
        <position position="71"/>
    </location>
    <ligand>
        <name>Mg(2+)</name>
        <dbReference type="ChEBI" id="CHEBI:18420"/>
    </ligand>
</feature>
<feature type="binding site" evidence="1">
    <location>
        <position position="144"/>
    </location>
    <ligand>
        <name>Mg(2+)</name>
        <dbReference type="ChEBI" id="CHEBI:18420"/>
    </ligand>
</feature>
<feature type="binding site" evidence="1">
    <location>
        <begin position="151"/>
        <end position="153"/>
    </location>
    <ligand>
        <name>CTP</name>
        <dbReference type="ChEBI" id="CHEBI:37563"/>
        <note>allosteric inhibitor</note>
    </ligand>
</feature>
<feature type="binding site" evidence="1">
    <location>
        <begin position="191"/>
        <end position="196"/>
    </location>
    <ligand>
        <name>CTP</name>
        <dbReference type="ChEBI" id="CHEBI:37563"/>
        <note>allosteric inhibitor</note>
    </ligand>
</feature>
<feature type="binding site" evidence="1">
    <location>
        <begin position="191"/>
        <end position="196"/>
    </location>
    <ligand>
        <name>UTP</name>
        <dbReference type="ChEBI" id="CHEBI:46398"/>
    </ligand>
</feature>
<feature type="binding site" evidence="1">
    <location>
        <position position="227"/>
    </location>
    <ligand>
        <name>CTP</name>
        <dbReference type="ChEBI" id="CHEBI:37563"/>
        <note>allosteric inhibitor</note>
    </ligand>
</feature>
<feature type="binding site" evidence="1">
    <location>
        <position position="227"/>
    </location>
    <ligand>
        <name>UTP</name>
        <dbReference type="ChEBI" id="CHEBI:46398"/>
    </ligand>
</feature>
<feature type="binding site" evidence="1">
    <location>
        <position position="357"/>
    </location>
    <ligand>
        <name>L-glutamine</name>
        <dbReference type="ChEBI" id="CHEBI:58359"/>
    </ligand>
</feature>
<feature type="binding site" evidence="1">
    <location>
        <begin position="385"/>
        <end position="388"/>
    </location>
    <ligand>
        <name>L-glutamine</name>
        <dbReference type="ChEBI" id="CHEBI:58359"/>
    </ligand>
</feature>
<feature type="binding site" evidence="1">
    <location>
        <position position="408"/>
    </location>
    <ligand>
        <name>L-glutamine</name>
        <dbReference type="ChEBI" id="CHEBI:58359"/>
    </ligand>
</feature>
<feature type="binding site" evidence="1">
    <location>
        <position position="474"/>
    </location>
    <ligand>
        <name>L-glutamine</name>
        <dbReference type="ChEBI" id="CHEBI:58359"/>
    </ligand>
</feature>
<accession>A1TLT0</accession>
<proteinExistence type="inferred from homology"/>
<protein>
    <recommendedName>
        <fullName evidence="1">CTP synthase</fullName>
        <ecNumber evidence="1">6.3.4.2</ecNumber>
    </recommendedName>
    <alternativeName>
        <fullName evidence="1">Cytidine 5'-triphosphate synthase</fullName>
    </alternativeName>
    <alternativeName>
        <fullName evidence="1">Cytidine triphosphate synthetase</fullName>
        <shortName evidence="1">CTP synthetase</shortName>
        <shortName evidence="1">CTPS</shortName>
    </alternativeName>
    <alternativeName>
        <fullName evidence="1">UTP--ammonia ligase</fullName>
    </alternativeName>
</protein>